<gene>
    <name evidence="1" type="primary">cysI</name>
    <name type="ordered locus">ECIAI1_2867</name>
</gene>
<feature type="chain" id="PRO_1000146646" description="Sulfite reductase [NADPH] hemoprotein beta-component">
    <location>
        <begin position="1"/>
        <end position="570"/>
    </location>
</feature>
<feature type="binding site" evidence="1">
    <location>
        <position position="434"/>
    </location>
    <ligand>
        <name>[4Fe-4S] cluster</name>
        <dbReference type="ChEBI" id="CHEBI:49883"/>
    </ligand>
</feature>
<feature type="binding site" evidence="1">
    <location>
        <position position="440"/>
    </location>
    <ligand>
        <name>[4Fe-4S] cluster</name>
        <dbReference type="ChEBI" id="CHEBI:49883"/>
    </ligand>
</feature>
<feature type="binding site" evidence="1">
    <location>
        <position position="479"/>
    </location>
    <ligand>
        <name>[4Fe-4S] cluster</name>
        <dbReference type="ChEBI" id="CHEBI:49883"/>
    </ligand>
</feature>
<feature type="binding site" evidence="1">
    <location>
        <position position="483"/>
    </location>
    <ligand>
        <name>[4Fe-4S] cluster</name>
        <dbReference type="ChEBI" id="CHEBI:49883"/>
    </ligand>
</feature>
<feature type="binding site" description="axial binding residue" evidence="1">
    <location>
        <position position="483"/>
    </location>
    <ligand>
        <name>siroheme</name>
        <dbReference type="ChEBI" id="CHEBI:60052"/>
    </ligand>
    <ligandPart>
        <name>Fe</name>
        <dbReference type="ChEBI" id="CHEBI:18248"/>
    </ligandPart>
</feature>
<organism>
    <name type="scientific">Escherichia coli O8 (strain IAI1)</name>
    <dbReference type="NCBI Taxonomy" id="585034"/>
    <lineage>
        <taxon>Bacteria</taxon>
        <taxon>Pseudomonadati</taxon>
        <taxon>Pseudomonadota</taxon>
        <taxon>Gammaproteobacteria</taxon>
        <taxon>Enterobacterales</taxon>
        <taxon>Enterobacteriaceae</taxon>
        <taxon>Escherichia</taxon>
    </lineage>
</organism>
<sequence length="570" mass="63960">MSEKHPGPLVVEGKLTDAERMKLESNYLRGTIAEDLNDGLTGGFKGDNFLLIRFHGMYQQDDRDIRAERAEQKLEPRHAMLLRCRLPGGVITTKQWQAIDKFAGENTIYGSIRLTNRQTFQFHGILKKNVKPVHQMLHSVGLDALATANDMNRNVLCTSNPYESQLHAEAYEWAKKISEHLLPRTRAYAEIWLDQEKVATTDEEPILGQTYLPRKFKTTVVIPPQNDIDLHANDMNFVAIAENGKLVGFNLLVGGGLSIEHGNKKTYARTASEFGYLPLEHTLAVAEAVVTTQRDWGNRTDRKNAKTKYTLERVGVETFKAEVERRAGIKFEPIRPYEFTGRGDRIGWVKGIDDNWHLTLFIENGRILDYPGRPLKTGLLEIAKIHKGDFRITANQNLIIAGVPESEKAKIEKIAKESGLMNAVTPQRENSMACVSFPTCPLAMAEAERFLPSFIDNIDNLMAKHGVSDEHIVMRVTGCPNGCGRAMLAEVGLVGKAPGRYNLHLGGNRIGTRIPRMYKENITEPEILASLDELIGRWAKEREAGEGFGDFTVRAGIIRPVLDPARDLWD</sequence>
<comment type="function">
    <text evidence="1">Component of the sulfite reductase complex that catalyzes the 6-electron reduction of sulfite to sulfide. This is one of several activities required for the biosynthesis of L-cysteine from sulfate.</text>
</comment>
<comment type="catalytic activity">
    <reaction evidence="1">
        <text>hydrogen sulfide + 3 NADP(+) + 3 H2O = sulfite + 3 NADPH + 4 H(+)</text>
        <dbReference type="Rhea" id="RHEA:13801"/>
        <dbReference type="ChEBI" id="CHEBI:15377"/>
        <dbReference type="ChEBI" id="CHEBI:15378"/>
        <dbReference type="ChEBI" id="CHEBI:17359"/>
        <dbReference type="ChEBI" id="CHEBI:29919"/>
        <dbReference type="ChEBI" id="CHEBI:57783"/>
        <dbReference type="ChEBI" id="CHEBI:58349"/>
        <dbReference type="EC" id="1.8.1.2"/>
    </reaction>
</comment>
<comment type="cofactor">
    <cofactor evidence="1">
        <name>siroheme</name>
        <dbReference type="ChEBI" id="CHEBI:60052"/>
    </cofactor>
    <text evidence="1">Binds 1 siroheme per subunit.</text>
</comment>
<comment type="cofactor">
    <cofactor evidence="1">
        <name>[4Fe-4S] cluster</name>
        <dbReference type="ChEBI" id="CHEBI:49883"/>
    </cofactor>
    <text evidence="1">Binds 1 [4Fe-4S] cluster per subunit.</text>
</comment>
<comment type="pathway">
    <text evidence="1">Sulfur metabolism; hydrogen sulfide biosynthesis; hydrogen sulfide from sulfite (NADPH route): step 1/1.</text>
</comment>
<comment type="subunit">
    <text evidence="1">Alpha(8)-beta(8). The alpha component is a flavoprotein, the beta component is a hemoprotein.</text>
</comment>
<comment type="similarity">
    <text evidence="1">Belongs to the nitrite and sulfite reductase 4Fe-4S domain family.</text>
</comment>
<proteinExistence type="inferred from homology"/>
<accession>B7LXH6</accession>
<reference key="1">
    <citation type="journal article" date="2009" name="PLoS Genet.">
        <title>Organised genome dynamics in the Escherichia coli species results in highly diverse adaptive paths.</title>
        <authorList>
            <person name="Touchon M."/>
            <person name="Hoede C."/>
            <person name="Tenaillon O."/>
            <person name="Barbe V."/>
            <person name="Baeriswyl S."/>
            <person name="Bidet P."/>
            <person name="Bingen E."/>
            <person name="Bonacorsi S."/>
            <person name="Bouchier C."/>
            <person name="Bouvet O."/>
            <person name="Calteau A."/>
            <person name="Chiapello H."/>
            <person name="Clermont O."/>
            <person name="Cruveiller S."/>
            <person name="Danchin A."/>
            <person name="Diard M."/>
            <person name="Dossat C."/>
            <person name="Karoui M.E."/>
            <person name="Frapy E."/>
            <person name="Garry L."/>
            <person name="Ghigo J.M."/>
            <person name="Gilles A.M."/>
            <person name="Johnson J."/>
            <person name="Le Bouguenec C."/>
            <person name="Lescat M."/>
            <person name="Mangenot S."/>
            <person name="Martinez-Jehanne V."/>
            <person name="Matic I."/>
            <person name="Nassif X."/>
            <person name="Oztas S."/>
            <person name="Petit M.A."/>
            <person name="Pichon C."/>
            <person name="Rouy Z."/>
            <person name="Ruf C.S."/>
            <person name="Schneider D."/>
            <person name="Tourret J."/>
            <person name="Vacherie B."/>
            <person name="Vallenet D."/>
            <person name="Medigue C."/>
            <person name="Rocha E.P.C."/>
            <person name="Denamur E."/>
        </authorList>
    </citation>
    <scope>NUCLEOTIDE SEQUENCE [LARGE SCALE GENOMIC DNA]</scope>
    <source>
        <strain>IAI1</strain>
    </source>
</reference>
<protein>
    <recommendedName>
        <fullName evidence="1">Sulfite reductase [NADPH] hemoprotein beta-component</fullName>
        <shortName evidence="1">SiR-HP</shortName>
        <shortName evidence="1">SiRHP</shortName>
        <ecNumber evidence="1">1.8.1.2</ecNumber>
    </recommendedName>
</protein>
<evidence type="ECO:0000255" key="1">
    <source>
        <dbReference type="HAMAP-Rule" id="MF_01540"/>
    </source>
</evidence>
<dbReference type="EC" id="1.8.1.2" evidence="1"/>
<dbReference type="EMBL" id="CU928160">
    <property type="protein sequence ID" value="CAQ99688.1"/>
    <property type="molecule type" value="Genomic_DNA"/>
</dbReference>
<dbReference type="RefSeq" id="WP_001290706.1">
    <property type="nucleotide sequence ID" value="NC_011741.1"/>
</dbReference>
<dbReference type="SMR" id="B7LXH6"/>
<dbReference type="GeneID" id="75205593"/>
<dbReference type="KEGG" id="ecr:ECIAI1_2867"/>
<dbReference type="HOGENOM" id="CLU_001975_3_2_6"/>
<dbReference type="UniPathway" id="UPA00140">
    <property type="reaction ID" value="UER00207"/>
</dbReference>
<dbReference type="GO" id="GO:0009337">
    <property type="term" value="C:sulfite reductase complex (NADPH)"/>
    <property type="evidence" value="ECO:0007669"/>
    <property type="project" value="InterPro"/>
</dbReference>
<dbReference type="GO" id="GO:0051539">
    <property type="term" value="F:4 iron, 4 sulfur cluster binding"/>
    <property type="evidence" value="ECO:0007669"/>
    <property type="project" value="UniProtKB-KW"/>
</dbReference>
<dbReference type="GO" id="GO:0020037">
    <property type="term" value="F:heme binding"/>
    <property type="evidence" value="ECO:0007669"/>
    <property type="project" value="InterPro"/>
</dbReference>
<dbReference type="GO" id="GO:0046872">
    <property type="term" value="F:metal ion binding"/>
    <property type="evidence" value="ECO:0007669"/>
    <property type="project" value="UniProtKB-KW"/>
</dbReference>
<dbReference type="GO" id="GO:0050661">
    <property type="term" value="F:NADP binding"/>
    <property type="evidence" value="ECO:0007669"/>
    <property type="project" value="InterPro"/>
</dbReference>
<dbReference type="GO" id="GO:0050311">
    <property type="term" value="F:sulfite reductase (ferredoxin) activity"/>
    <property type="evidence" value="ECO:0007669"/>
    <property type="project" value="TreeGrafter"/>
</dbReference>
<dbReference type="GO" id="GO:0004783">
    <property type="term" value="F:sulfite reductase (NADPH) activity"/>
    <property type="evidence" value="ECO:0007669"/>
    <property type="project" value="UniProtKB-UniRule"/>
</dbReference>
<dbReference type="GO" id="GO:0019344">
    <property type="term" value="P:cysteine biosynthetic process"/>
    <property type="evidence" value="ECO:0007669"/>
    <property type="project" value="UniProtKB-KW"/>
</dbReference>
<dbReference type="GO" id="GO:0070814">
    <property type="term" value="P:hydrogen sulfide biosynthetic process"/>
    <property type="evidence" value="ECO:0007669"/>
    <property type="project" value="UniProtKB-UniRule"/>
</dbReference>
<dbReference type="GO" id="GO:0000103">
    <property type="term" value="P:sulfate assimilation"/>
    <property type="evidence" value="ECO:0007669"/>
    <property type="project" value="UniProtKB-UniRule"/>
</dbReference>
<dbReference type="FunFam" id="3.30.413.10:FF:000003">
    <property type="entry name" value="Sulfite reductase [NADPH] hemoprotein beta-component"/>
    <property type="match status" value="1"/>
</dbReference>
<dbReference type="FunFam" id="3.30.413.10:FF:000004">
    <property type="entry name" value="Sulfite reductase [NADPH] hemoprotein beta-component"/>
    <property type="match status" value="1"/>
</dbReference>
<dbReference type="Gene3D" id="3.30.413.10">
    <property type="entry name" value="Sulfite Reductase Hemoprotein, domain 1"/>
    <property type="match status" value="2"/>
</dbReference>
<dbReference type="HAMAP" id="MF_01540">
    <property type="entry name" value="CysI"/>
    <property type="match status" value="1"/>
</dbReference>
<dbReference type="InterPro" id="IPR011786">
    <property type="entry name" value="CysI"/>
</dbReference>
<dbReference type="InterPro" id="IPR005117">
    <property type="entry name" value="NiRdtase/SiRdtase_haem-b_fer"/>
</dbReference>
<dbReference type="InterPro" id="IPR036136">
    <property type="entry name" value="Nit/Sulf_reduc_fer-like_dom_sf"/>
</dbReference>
<dbReference type="InterPro" id="IPR006067">
    <property type="entry name" value="NO2/SO3_Rdtase_4Fe4S_dom"/>
</dbReference>
<dbReference type="InterPro" id="IPR045169">
    <property type="entry name" value="NO2/SO3_Rdtase_4Fe4S_prot"/>
</dbReference>
<dbReference type="InterPro" id="IPR045854">
    <property type="entry name" value="NO2/SO3_Rdtase_4Fe4S_sf"/>
</dbReference>
<dbReference type="InterPro" id="IPR006066">
    <property type="entry name" value="NO2/SO3_Rdtase_FeS/sirohaem_BS"/>
</dbReference>
<dbReference type="NCBIfam" id="TIGR02041">
    <property type="entry name" value="CysI"/>
    <property type="match status" value="1"/>
</dbReference>
<dbReference type="NCBIfam" id="NF010029">
    <property type="entry name" value="PRK13504.1"/>
    <property type="match status" value="1"/>
</dbReference>
<dbReference type="PANTHER" id="PTHR11493:SF47">
    <property type="entry name" value="SULFITE REDUCTASE [NADPH] SUBUNIT BETA"/>
    <property type="match status" value="1"/>
</dbReference>
<dbReference type="PANTHER" id="PTHR11493">
    <property type="entry name" value="SULFITE REDUCTASE [NADPH] SUBUNIT BETA-RELATED"/>
    <property type="match status" value="1"/>
</dbReference>
<dbReference type="Pfam" id="PF01077">
    <property type="entry name" value="NIR_SIR"/>
    <property type="match status" value="1"/>
</dbReference>
<dbReference type="Pfam" id="PF03460">
    <property type="entry name" value="NIR_SIR_ferr"/>
    <property type="match status" value="2"/>
</dbReference>
<dbReference type="PRINTS" id="PR00397">
    <property type="entry name" value="SIROHAEM"/>
</dbReference>
<dbReference type="SUPFAM" id="SSF56014">
    <property type="entry name" value="Nitrite and sulphite reductase 4Fe-4S domain-like"/>
    <property type="match status" value="2"/>
</dbReference>
<dbReference type="SUPFAM" id="SSF55124">
    <property type="entry name" value="Nitrite/Sulfite reductase N-terminal domain-like"/>
    <property type="match status" value="2"/>
</dbReference>
<dbReference type="PROSITE" id="PS00365">
    <property type="entry name" value="NIR_SIR"/>
    <property type="match status" value="1"/>
</dbReference>
<name>CYSI_ECO8A</name>
<keyword id="KW-0004">4Fe-4S</keyword>
<keyword id="KW-0028">Amino-acid biosynthesis</keyword>
<keyword id="KW-0198">Cysteine biosynthesis</keyword>
<keyword id="KW-0349">Heme</keyword>
<keyword id="KW-0408">Iron</keyword>
<keyword id="KW-0411">Iron-sulfur</keyword>
<keyword id="KW-0479">Metal-binding</keyword>
<keyword id="KW-0521">NADP</keyword>
<keyword id="KW-0560">Oxidoreductase</keyword>